<accession>C4K2D9</accession>
<sequence length="246" mass="27489">MRHQDVAIIIPSRLSSTRLKQKPLQLIGSITLIERVFKQVNQAGLEHTYVATDSEEIASVITKVGGKVIFTDSAIPTGTNRTYEAFKLIPNNQNINYIVNVQGDMPFIEPSSILKIIEYLKNSKYDIVTPIVKVDRESVKASSNVTVAVDSAGTALYFSRSLIPNGAEEFLYHVGMYGFRKNALEKFVSLKPTFLEKTERLEQLRVLENGMTIGTCLVENVPISVDTEEDLKKAVKFYENISKLGL</sequence>
<evidence type="ECO:0000255" key="1">
    <source>
        <dbReference type="HAMAP-Rule" id="MF_00057"/>
    </source>
</evidence>
<comment type="function">
    <text evidence="1">Activates KDO (a required 8-carbon sugar) for incorporation into bacterial lipopolysaccharide in Gram-negative bacteria.</text>
</comment>
<comment type="catalytic activity">
    <reaction evidence="1">
        <text>3-deoxy-alpha-D-manno-oct-2-ulosonate + CTP = CMP-3-deoxy-beta-D-manno-octulosonate + diphosphate</text>
        <dbReference type="Rhea" id="RHEA:23448"/>
        <dbReference type="ChEBI" id="CHEBI:33019"/>
        <dbReference type="ChEBI" id="CHEBI:37563"/>
        <dbReference type="ChEBI" id="CHEBI:85986"/>
        <dbReference type="ChEBI" id="CHEBI:85987"/>
        <dbReference type="EC" id="2.7.7.38"/>
    </reaction>
</comment>
<comment type="pathway">
    <text evidence="1">Nucleotide-sugar biosynthesis; CMP-3-deoxy-D-manno-octulosonate biosynthesis; CMP-3-deoxy-D-manno-octulosonate from 3-deoxy-D-manno-octulosonate and CTP: step 1/1.</text>
</comment>
<comment type="pathway">
    <text evidence="1">Bacterial outer membrane biogenesis; lipopolysaccharide biosynthesis.</text>
</comment>
<comment type="subcellular location">
    <subcellularLocation>
        <location evidence="1">Cytoplasm</location>
    </subcellularLocation>
</comment>
<comment type="similarity">
    <text evidence="1">Belongs to the KdsB family.</text>
</comment>
<organism>
    <name type="scientific">Rickettsia peacockii (strain Rustic)</name>
    <dbReference type="NCBI Taxonomy" id="562019"/>
    <lineage>
        <taxon>Bacteria</taxon>
        <taxon>Pseudomonadati</taxon>
        <taxon>Pseudomonadota</taxon>
        <taxon>Alphaproteobacteria</taxon>
        <taxon>Rickettsiales</taxon>
        <taxon>Rickettsiaceae</taxon>
        <taxon>Rickettsieae</taxon>
        <taxon>Rickettsia</taxon>
        <taxon>spotted fever group</taxon>
    </lineage>
</organism>
<keyword id="KW-0963">Cytoplasm</keyword>
<keyword id="KW-0448">Lipopolysaccharide biosynthesis</keyword>
<keyword id="KW-0548">Nucleotidyltransferase</keyword>
<keyword id="KW-0808">Transferase</keyword>
<reference key="1">
    <citation type="journal article" date="2009" name="PLoS ONE">
        <title>Genome sequence of the endosymbiont Rickettsia peacockii and comparison with virulent Rickettsia rickettsii: identification of virulence factors.</title>
        <authorList>
            <person name="Felsheim R.F."/>
            <person name="Kurtti T.J."/>
            <person name="Munderloh U.G."/>
        </authorList>
    </citation>
    <scope>NUCLEOTIDE SEQUENCE [LARGE SCALE GENOMIC DNA]</scope>
    <source>
        <strain>Rustic</strain>
    </source>
</reference>
<protein>
    <recommendedName>
        <fullName evidence="1">3-deoxy-manno-octulosonate cytidylyltransferase</fullName>
        <ecNumber evidence="1">2.7.7.38</ecNumber>
    </recommendedName>
    <alternativeName>
        <fullName evidence="1">CMP-2-keto-3-deoxyoctulosonic acid synthase</fullName>
        <shortName evidence="1">CKS</shortName>
        <shortName evidence="1">CMP-KDO synthase</shortName>
    </alternativeName>
</protein>
<proteinExistence type="inferred from homology"/>
<dbReference type="EC" id="2.7.7.38" evidence="1"/>
<dbReference type="EMBL" id="CP001227">
    <property type="protein sequence ID" value="ACR47736.1"/>
    <property type="molecule type" value="Genomic_DNA"/>
</dbReference>
<dbReference type="RefSeq" id="WP_012736925.1">
    <property type="nucleotide sequence ID" value="NC_012730.1"/>
</dbReference>
<dbReference type="SMR" id="C4K2D9"/>
<dbReference type="KEGG" id="rpk:RPR_05930"/>
<dbReference type="HOGENOM" id="CLU_065038_0_1_5"/>
<dbReference type="UniPathway" id="UPA00030"/>
<dbReference type="UniPathway" id="UPA00358">
    <property type="reaction ID" value="UER00476"/>
</dbReference>
<dbReference type="Proteomes" id="UP000005015">
    <property type="component" value="Chromosome"/>
</dbReference>
<dbReference type="GO" id="GO:0005829">
    <property type="term" value="C:cytosol"/>
    <property type="evidence" value="ECO:0007669"/>
    <property type="project" value="TreeGrafter"/>
</dbReference>
<dbReference type="GO" id="GO:0008690">
    <property type="term" value="F:3-deoxy-manno-octulosonate cytidylyltransferase activity"/>
    <property type="evidence" value="ECO:0007669"/>
    <property type="project" value="UniProtKB-UniRule"/>
</dbReference>
<dbReference type="GO" id="GO:0033468">
    <property type="term" value="P:CMP-keto-3-deoxy-D-manno-octulosonic acid biosynthetic process"/>
    <property type="evidence" value="ECO:0007669"/>
    <property type="project" value="UniProtKB-UniRule"/>
</dbReference>
<dbReference type="GO" id="GO:0009103">
    <property type="term" value="P:lipopolysaccharide biosynthetic process"/>
    <property type="evidence" value="ECO:0007669"/>
    <property type="project" value="UniProtKB-UniRule"/>
</dbReference>
<dbReference type="CDD" id="cd02517">
    <property type="entry name" value="CMP-KDO-Synthetase"/>
    <property type="match status" value="1"/>
</dbReference>
<dbReference type="Gene3D" id="3.90.550.10">
    <property type="entry name" value="Spore Coat Polysaccharide Biosynthesis Protein SpsA, Chain A"/>
    <property type="match status" value="1"/>
</dbReference>
<dbReference type="HAMAP" id="MF_00057">
    <property type="entry name" value="KdsB"/>
    <property type="match status" value="1"/>
</dbReference>
<dbReference type="InterPro" id="IPR003329">
    <property type="entry name" value="Cytidylyl_trans"/>
</dbReference>
<dbReference type="InterPro" id="IPR004528">
    <property type="entry name" value="KdsB"/>
</dbReference>
<dbReference type="InterPro" id="IPR029044">
    <property type="entry name" value="Nucleotide-diphossugar_trans"/>
</dbReference>
<dbReference type="NCBIfam" id="TIGR00466">
    <property type="entry name" value="kdsB"/>
    <property type="match status" value="1"/>
</dbReference>
<dbReference type="NCBIfam" id="NF003948">
    <property type="entry name" value="PRK05450.1-1"/>
    <property type="match status" value="1"/>
</dbReference>
<dbReference type="NCBIfam" id="NF003952">
    <property type="entry name" value="PRK05450.1-5"/>
    <property type="match status" value="1"/>
</dbReference>
<dbReference type="PANTHER" id="PTHR42866">
    <property type="entry name" value="3-DEOXY-MANNO-OCTULOSONATE CYTIDYLYLTRANSFERASE"/>
    <property type="match status" value="1"/>
</dbReference>
<dbReference type="PANTHER" id="PTHR42866:SF2">
    <property type="entry name" value="3-DEOXY-MANNO-OCTULOSONATE CYTIDYLYLTRANSFERASE, MITOCHONDRIAL"/>
    <property type="match status" value="1"/>
</dbReference>
<dbReference type="Pfam" id="PF02348">
    <property type="entry name" value="CTP_transf_3"/>
    <property type="match status" value="1"/>
</dbReference>
<dbReference type="SUPFAM" id="SSF53448">
    <property type="entry name" value="Nucleotide-diphospho-sugar transferases"/>
    <property type="match status" value="1"/>
</dbReference>
<name>KDSB_RICPU</name>
<gene>
    <name evidence="1" type="primary">kdsB</name>
    <name type="ordered locus">RPR_05930</name>
</gene>
<feature type="chain" id="PRO_1000202347" description="3-deoxy-manno-octulosonate cytidylyltransferase">
    <location>
        <begin position="1"/>
        <end position="246"/>
    </location>
</feature>